<protein>
    <recommendedName>
        <fullName>D-erythrose-4-phosphate dehydrogenase</fullName>
        <shortName>E4PDH</shortName>
        <ecNumber>1.2.1.72</ecNumber>
    </recommendedName>
</protein>
<name>E4PD_ECOLI</name>
<sequence length="339" mass="37299">MTVRVAINGFGRIGRNVVRALYESGRRAEITVVAINELADAAGMAHLLKYDTSHGRFAWEVRQERDQLFVGDDAIRVLHERSLQSLPWRELGVDVVLDCTGVYGSREHGEAHIAAGAKKVLFSHPGSNDLDATVVYGVNQDQLRAEHRIVSNASCTTNCIIPVIKLLDDAYGIESGTVTTIHSAMHDQQVIDAYHPDLRRTRAASQSIIPVDTKLAAGITRFFPQFNDRFEAIAVRVPTINVTAIDLSVTVKKPVKANEVNLLLQKAAQGAFHGIVDYTELPLVSVDFNHDPHSAIVDGTQTRVSGAHLIKTLVWCDNEWGFANRMLDTTLAMATVAFR</sequence>
<accession>P0A9B6</accession>
<accession>P11603</accession>
<accession>Q2M9R5</accession>
<reference key="1">
    <citation type="journal article" date="1989" name="Mol. Microbiol.">
        <title>Identification, molecular cloning and sequence analysis of a gene cluster encoding the class II fructose 1,6-bisphosphate aldolase, 3-phosphoglycerate kinase and a putative second glyceraldehyde 3-phosphate dehydrogenase of Escherichia coli.</title>
        <authorList>
            <person name="Alefounder P.R."/>
            <person name="Perham R.N."/>
        </authorList>
    </citation>
    <scope>NUCLEOTIDE SEQUENCE [GENOMIC DNA]</scope>
    <source>
        <strain>K12 / CS520</strain>
    </source>
</reference>
<reference key="2">
    <citation type="journal article" date="1997" name="Science">
        <title>The complete genome sequence of Escherichia coli K-12.</title>
        <authorList>
            <person name="Blattner F.R."/>
            <person name="Plunkett G. III"/>
            <person name="Bloch C.A."/>
            <person name="Perna N.T."/>
            <person name="Burland V."/>
            <person name="Riley M."/>
            <person name="Collado-Vides J."/>
            <person name="Glasner J.D."/>
            <person name="Rode C.K."/>
            <person name="Mayhew G.F."/>
            <person name="Gregor J."/>
            <person name="Davis N.W."/>
            <person name="Kirkpatrick H.A."/>
            <person name="Goeden M.A."/>
            <person name="Rose D.J."/>
            <person name="Mau B."/>
            <person name="Shao Y."/>
        </authorList>
    </citation>
    <scope>NUCLEOTIDE SEQUENCE [LARGE SCALE GENOMIC DNA]</scope>
    <source>
        <strain>K12 / MG1655 / ATCC 47076</strain>
    </source>
</reference>
<reference key="3">
    <citation type="journal article" date="2006" name="Mol. Syst. Biol.">
        <title>Highly accurate genome sequences of Escherichia coli K-12 strains MG1655 and W3110.</title>
        <authorList>
            <person name="Hayashi K."/>
            <person name="Morooka N."/>
            <person name="Yamamoto Y."/>
            <person name="Fujita K."/>
            <person name="Isono K."/>
            <person name="Choi S."/>
            <person name="Ohtsubo E."/>
            <person name="Baba T."/>
            <person name="Wanner B.L."/>
            <person name="Mori H."/>
            <person name="Horiuchi T."/>
        </authorList>
    </citation>
    <scope>NUCLEOTIDE SEQUENCE [LARGE SCALE GENOMIC DNA]</scope>
    <source>
        <strain>K12 / W3110 / ATCC 27325 / DSM 5911</strain>
    </source>
</reference>
<reference key="4">
    <citation type="journal article" date="1995" name="J. Bacteriol.">
        <title>Biochemical characterization of gapB-encoded erythrose 4-phosphate dehydrogenase of Escherichia coli K-12 and its possible role in pyridoxal 5'-phosphate biosynthesis.</title>
        <authorList>
            <person name="Zhao G."/>
            <person name="Pease A.J."/>
            <person name="Bharani N."/>
            <person name="Winkler M.E."/>
        </authorList>
    </citation>
    <scope>PROTEIN SEQUENCE OF 2-13</scope>
    <scope>CATALYTIC ACTIVITY</scope>
    <scope>SUBUNIT</scope>
    <scope>BIOPHYSICOCHEMICAL PROPERTIES</scope>
    <source>
        <strain>K12</strain>
    </source>
</reference>
<reference key="5">
    <citation type="journal article" date="1990" name="J. Mol. Evol.">
        <title>A naturally occurring horizontal gene transfer from a eukaryote to a prokaryote.</title>
        <authorList>
            <person name="Doolittle R.F."/>
            <person name="Feng D.F."/>
            <person name="Anderson K.L."/>
            <person name="Alberro M.R."/>
        </authorList>
    </citation>
    <scope>GENE TRANSFER DISCUSSION</scope>
</reference>
<reference key="6">
    <citation type="journal article" date="1997" name="J. Biol. Chem.">
        <title>Comparative enzymatic properties of GapB-encoded erythrose-4-phosphate dehydrogenase of Escherichia coli and phosphorylating glyceraldehyde-3-phosphate dehydrogenase.</title>
        <authorList>
            <person name="Boschi-Muller S."/>
            <person name="Azza S."/>
            <person name="Pollastro D."/>
            <person name="Corbier C."/>
            <person name="Branlant G."/>
        </authorList>
    </citation>
    <scope>FUNCTION</scope>
    <scope>BIOPHYSICOCHEMICAL PROPERTIES</scope>
    <scope>MUTAGENESIS OF CYS-155; HIS-182 AND CYS-316</scope>
    <scope>MASS SPECTROMETRY</scope>
    <scope>REACTION MECHANISM</scope>
</reference>
<reference key="7">
    <citation type="journal article" date="1998" name="J. Bacteriol.">
        <title>Involvement of the gapA- and epd (gapB)-encoded dehydrogenases in pyridoxal 5'-phosphate coenzyme biosynthesis in Escherichia coli K-12.</title>
        <authorList>
            <person name="Yang Y."/>
            <person name="Zhao G."/>
            <person name="Man T.-K."/>
            <person name="Winkler M.E."/>
        </authorList>
    </citation>
    <scope>ROLE IN PNP BIOSYNTHESIS</scope>
</reference>
<comment type="function">
    <text evidence="4 5">Catalyzes the NAD-dependent conversion of D-erythrose 4-phosphate to 4-phosphoerythronate.</text>
</comment>
<comment type="catalytic activity">
    <reaction evidence="3">
        <text>D-erythrose 4-phosphate + NAD(+) + H2O = 4-phospho-D-erythronate + NADH + 2 H(+)</text>
        <dbReference type="Rhea" id="RHEA:12056"/>
        <dbReference type="ChEBI" id="CHEBI:15377"/>
        <dbReference type="ChEBI" id="CHEBI:15378"/>
        <dbReference type="ChEBI" id="CHEBI:16897"/>
        <dbReference type="ChEBI" id="CHEBI:57540"/>
        <dbReference type="ChEBI" id="CHEBI:57945"/>
        <dbReference type="ChEBI" id="CHEBI:58766"/>
        <dbReference type="EC" id="1.2.1.72"/>
    </reaction>
</comment>
<comment type="biophysicochemical properties">
    <kinetics>
        <KM evidence="3 4">74 uM for NAD (at 37 degrees Celsius and pH 8.6)</KM>
        <KM evidence="3 4">510 uM for D-erythrose 4-phosphate (at 25 degrees Celsius and pH 8.9)</KM>
        <KM evidence="3 4">960 uM for D-erythrose 4-phosphate (at 37 degrees Celsius and pH 8.6)</KM>
        <KM evidence="3 4">1100 uM for glyceraldehyde 3-phosphate (at 25 degrees Celsius and pH 8.9)</KM>
        <Vmax evidence="3 4">91.2 umol/min/mg enzyme toward D-erythrose 4-phosphate (at 37 degrees Celsius and pH 8.6)</Vmax>
        <Vmax evidence="3 4">77.2 umol/min/mg enzyme toward NAD (at 37 degrees Celsius and pH 8.6)</Vmax>
    </kinetics>
    <phDependence>
        <text evidence="3 4">Optimum pH is about 8.6.</text>
    </phDependence>
    <temperatureDependence>
        <text evidence="3 4">Optimum temperature is 50 degrees Celsius at pH 8.6. Relatively thermostable. Activity begins to decrease significantly when E4PDH is incubated at 50 degrees Celsius for 5 minutes.</text>
    </temperatureDependence>
</comment>
<comment type="pathway">
    <text>Cofactor biosynthesis; pyridoxine 5'-phosphate biosynthesis; pyridoxine 5'-phosphate from D-erythrose 4-phosphate: step 1/5.</text>
</comment>
<comment type="subunit">
    <text evidence="3">Homotetramer.</text>
</comment>
<comment type="subcellular location">
    <subcellularLocation>
        <location>Cytoplasm</location>
    </subcellularLocation>
</comment>
<comment type="mass spectrometry" mass="37170.0" method="Unknown" evidence="4"/>
<comment type="similarity">
    <text evidence="6">Belongs to the glyceraldehyde-3-phosphate dehydrogenase family. Epd subfamily.</text>
</comment>
<comment type="caution">
    <text evidence="6">Was originally (PubMed:2546007, PubMed:2124629) thought to be a glyceraldehyde 3-phosphate dehydrogenase, but glyceraldehyde 3-phosphate is not an efficient substrate (PubMed:7751290, PubMed:9182530).</text>
</comment>
<dbReference type="EC" id="1.2.1.72"/>
<dbReference type="EMBL" id="X14436">
    <property type="protein sequence ID" value="CAA32603.1"/>
    <property type="molecule type" value="Genomic_DNA"/>
</dbReference>
<dbReference type="EMBL" id="U28377">
    <property type="protein sequence ID" value="AAA69094.1"/>
    <property type="molecule type" value="Genomic_DNA"/>
</dbReference>
<dbReference type="EMBL" id="U00096">
    <property type="protein sequence ID" value="AAC75964.1"/>
    <property type="molecule type" value="Genomic_DNA"/>
</dbReference>
<dbReference type="EMBL" id="AP009048">
    <property type="protein sequence ID" value="BAE76991.1"/>
    <property type="molecule type" value="Genomic_DNA"/>
</dbReference>
<dbReference type="PIR" id="S04732">
    <property type="entry name" value="DEECGB"/>
</dbReference>
<dbReference type="RefSeq" id="NP_417402.1">
    <property type="nucleotide sequence ID" value="NC_000913.3"/>
</dbReference>
<dbReference type="RefSeq" id="WP_000218480.1">
    <property type="nucleotide sequence ID" value="NZ_SSZK01000003.1"/>
</dbReference>
<dbReference type="PDB" id="2X5J">
    <property type="method" value="X-ray"/>
    <property type="resolution" value="2.30 A"/>
    <property type="chains" value="O/P/Q/R=1-339"/>
</dbReference>
<dbReference type="PDB" id="2X5K">
    <property type="method" value="X-ray"/>
    <property type="resolution" value="2.37 A"/>
    <property type="chains" value="O/P/Q/R=1-339"/>
</dbReference>
<dbReference type="PDB" id="2XF8">
    <property type="method" value="X-ray"/>
    <property type="resolution" value="2.95 A"/>
    <property type="chains" value="A/B/C/D/E/F/G/H/I/J/K/L/M/N/O/P=2-339"/>
</dbReference>
<dbReference type="PDBsum" id="2X5J"/>
<dbReference type="PDBsum" id="2X5K"/>
<dbReference type="PDBsum" id="2XF8"/>
<dbReference type="SMR" id="P0A9B6"/>
<dbReference type="BioGRID" id="4262067">
    <property type="interactions" value="13"/>
</dbReference>
<dbReference type="DIP" id="DIP-9520N"/>
<dbReference type="FunCoup" id="P0A9B6">
    <property type="interactions" value="162"/>
</dbReference>
<dbReference type="IntAct" id="P0A9B6">
    <property type="interactions" value="2"/>
</dbReference>
<dbReference type="STRING" id="511145.b2927"/>
<dbReference type="jPOST" id="P0A9B6"/>
<dbReference type="PaxDb" id="511145-b2927"/>
<dbReference type="EnsemblBacteria" id="AAC75964">
    <property type="protein sequence ID" value="AAC75964"/>
    <property type="gene ID" value="b2927"/>
</dbReference>
<dbReference type="GeneID" id="93779071"/>
<dbReference type="GeneID" id="947413"/>
<dbReference type="KEGG" id="ecj:JW2894"/>
<dbReference type="KEGG" id="eco:b2927"/>
<dbReference type="KEGG" id="ecoc:C3026_16035"/>
<dbReference type="PATRIC" id="fig|1411691.4.peg.3805"/>
<dbReference type="EchoBASE" id="EB0363"/>
<dbReference type="eggNOG" id="COG0057">
    <property type="taxonomic scope" value="Bacteria"/>
</dbReference>
<dbReference type="HOGENOM" id="CLU_030140_0_2_6"/>
<dbReference type="InParanoid" id="P0A9B6"/>
<dbReference type="OMA" id="ENMVKIM"/>
<dbReference type="OrthoDB" id="9803304at2"/>
<dbReference type="PhylomeDB" id="P0A9B6"/>
<dbReference type="BioCyc" id="EcoCyc:ERYTH4PDEHYDROG-MONOMER"/>
<dbReference type="BioCyc" id="MetaCyc:ERYTH4PDEHYDROG-MONOMER"/>
<dbReference type="BRENDA" id="1.2.1.72">
    <property type="organism ID" value="2026"/>
</dbReference>
<dbReference type="SABIO-RK" id="P0A9B6"/>
<dbReference type="UniPathway" id="UPA00244">
    <property type="reaction ID" value="UER00309"/>
</dbReference>
<dbReference type="EvolutionaryTrace" id="P0A9B6"/>
<dbReference type="PRO" id="PR:P0A9B6"/>
<dbReference type="Proteomes" id="UP000000625">
    <property type="component" value="Chromosome"/>
</dbReference>
<dbReference type="GO" id="GO:0005829">
    <property type="term" value="C:cytosol"/>
    <property type="evidence" value="ECO:0000314"/>
    <property type="project" value="EcoCyc"/>
</dbReference>
<dbReference type="GO" id="GO:0048001">
    <property type="term" value="F:erythrose-4-phosphate dehydrogenase activity"/>
    <property type="evidence" value="ECO:0000314"/>
    <property type="project" value="EcoCyc"/>
</dbReference>
<dbReference type="GO" id="GO:0004365">
    <property type="term" value="F:glyceraldehyde-3-phosphate dehydrogenase (NAD+) (phosphorylating) activity"/>
    <property type="evidence" value="ECO:0000314"/>
    <property type="project" value="EcoCyc"/>
</dbReference>
<dbReference type="GO" id="GO:0051287">
    <property type="term" value="F:NAD binding"/>
    <property type="evidence" value="ECO:0000314"/>
    <property type="project" value="EcoCyc"/>
</dbReference>
<dbReference type="GO" id="GO:0006006">
    <property type="term" value="P:glucose metabolic process"/>
    <property type="evidence" value="ECO:0000314"/>
    <property type="project" value="EcoCyc"/>
</dbReference>
<dbReference type="GO" id="GO:0042823">
    <property type="term" value="P:pyridoxal phosphate biosynthetic process"/>
    <property type="evidence" value="ECO:0000314"/>
    <property type="project" value="EcoCyc"/>
</dbReference>
<dbReference type="GO" id="GO:0008615">
    <property type="term" value="P:pyridoxine biosynthetic process"/>
    <property type="evidence" value="ECO:0000315"/>
    <property type="project" value="EcoCyc"/>
</dbReference>
<dbReference type="CDD" id="cd23937">
    <property type="entry name" value="GAPDH_C_E4PDH"/>
    <property type="match status" value="1"/>
</dbReference>
<dbReference type="CDD" id="cd17892">
    <property type="entry name" value="GAPDH_N_E4PDH"/>
    <property type="match status" value="1"/>
</dbReference>
<dbReference type="FunFam" id="3.30.360.10:FF:000007">
    <property type="entry name" value="D-erythrose-4-phosphate dehydrogenase"/>
    <property type="match status" value="1"/>
</dbReference>
<dbReference type="FunFam" id="3.40.50.720:FF:000001">
    <property type="entry name" value="Glyceraldehyde-3-phosphate dehydrogenase"/>
    <property type="match status" value="1"/>
</dbReference>
<dbReference type="Gene3D" id="3.30.360.10">
    <property type="entry name" value="Dihydrodipicolinate Reductase, domain 2"/>
    <property type="match status" value="1"/>
</dbReference>
<dbReference type="Gene3D" id="3.40.50.720">
    <property type="entry name" value="NAD(P)-binding Rossmann-like Domain"/>
    <property type="match status" value="1"/>
</dbReference>
<dbReference type="HAMAP" id="MF_01640">
    <property type="entry name" value="E4P_dehydrog"/>
    <property type="match status" value="1"/>
</dbReference>
<dbReference type="InterPro" id="IPR006422">
    <property type="entry name" value="E4P_DH_bac"/>
</dbReference>
<dbReference type="InterPro" id="IPR020831">
    <property type="entry name" value="GlycerAld/Erythrose_P_DH"/>
</dbReference>
<dbReference type="InterPro" id="IPR020830">
    <property type="entry name" value="GlycerAld_3-P_DH_AS"/>
</dbReference>
<dbReference type="InterPro" id="IPR020829">
    <property type="entry name" value="GlycerAld_3-P_DH_cat"/>
</dbReference>
<dbReference type="InterPro" id="IPR020828">
    <property type="entry name" value="GlycerAld_3-P_DH_NAD(P)-bd"/>
</dbReference>
<dbReference type="InterPro" id="IPR036291">
    <property type="entry name" value="NAD(P)-bd_dom_sf"/>
</dbReference>
<dbReference type="NCBIfam" id="TIGR01532">
    <property type="entry name" value="E4PD_g-proteo"/>
    <property type="match status" value="1"/>
</dbReference>
<dbReference type="NCBIfam" id="NF010058">
    <property type="entry name" value="PRK13535.1"/>
    <property type="match status" value="1"/>
</dbReference>
<dbReference type="PANTHER" id="PTHR43148">
    <property type="entry name" value="GLYCERALDEHYDE-3-PHOSPHATE DEHYDROGENASE 2"/>
    <property type="match status" value="1"/>
</dbReference>
<dbReference type="Pfam" id="PF02800">
    <property type="entry name" value="Gp_dh_C"/>
    <property type="match status" value="1"/>
</dbReference>
<dbReference type="Pfam" id="PF00044">
    <property type="entry name" value="Gp_dh_N"/>
    <property type="match status" value="1"/>
</dbReference>
<dbReference type="PIRSF" id="PIRSF000149">
    <property type="entry name" value="GAP_DH"/>
    <property type="match status" value="1"/>
</dbReference>
<dbReference type="PRINTS" id="PR00078">
    <property type="entry name" value="G3PDHDRGNASE"/>
</dbReference>
<dbReference type="SMART" id="SM00846">
    <property type="entry name" value="Gp_dh_N"/>
    <property type="match status" value="1"/>
</dbReference>
<dbReference type="SUPFAM" id="SSF55347">
    <property type="entry name" value="Glyceraldehyde-3-phosphate dehydrogenase-like, C-terminal domain"/>
    <property type="match status" value="1"/>
</dbReference>
<dbReference type="SUPFAM" id="SSF51735">
    <property type="entry name" value="NAD(P)-binding Rossmann-fold domains"/>
    <property type="match status" value="1"/>
</dbReference>
<dbReference type="PROSITE" id="PS00071">
    <property type="entry name" value="GAPDH"/>
    <property type="match status" value="1"/>
</dbReference>
<gene>
    <name type="primary">epd</name>
    <name type="synonym">gapB</name>
    <name type="ordered locus">b2927</name>
    <name type="ordered locus">JW2894</name>
</gene>
<evidence type="ECO:0000250" key="1"/>
<evidence type="ECO:0000255" key="2"/>
<evidence type="ECO:0000269" key="3">
    <source>
    </source>
</evidence>
<evidence type="ECO:0000269" key="4">
    <source>
    </source>
</evidence>
<evidence type="ECO:0000269" key="5">
    <source>
    </source>
</evidence>
<evidence type="ECO:0000305" key="6"/>
<evidence type="ECO:0007829" key="7">
    <source>
        <dbReference type="PDB" id="2X5J"/>
    </source>
</evidence>
<evidence type="ECO:0007829" key="8">
    <source>
        <dbReference type="PDB" id="2XF8"/>
    </source>
</evidence>
<organism>
    <name type="scientific">Escherichia coli (strain K12)</name>
    <dbReference type="NCBI Taxonomy" id="83333"/>
    <lineage>
        <taxon>Bacteria</taxon>
        <taxon>Pseudomonadati</taxon>
        <taxon>Pseudomonadota</taxon>
        <taxon>Gammaproteobacteria</taxon>
        <taxon>Enterobacterales</taxon>
        <taxon>Enterobacteriaceae</taxon>
        <taxon>Escherichia</taxon>
    </lineage>
</organism>
<feature type="initiator methionine" description="Removed" evidence="3">
    <location>
        <position position="1"/>
    </location>
</feature>
<feature type="chain" id="PRO_0000145650" description="D-erythrose-4-phosphate dehydrogenase">
    <location>
        <begin position="2"/>
        <end position="339"/>
    </location>
</feature>
<feature type="active site" description="Nucleophile" evidence="1">
    <location>
        <position position="155"/>
    </location>
</feature>
<feature type="binding site" evidence="1">
    <location>
        <begin position="12"/>
        <end position="13"/>
    </location>
    <ligand>
        <name>NAD(+)</name>
        <dbReference type="ChEBI" id="CHEBI:57540"/>
    </ligand>
</feature>
<feature type="binding site" evidence="1">
    <location>
        <position position="81"/>
    </location>
    <ligand>
        <name>NAD(+)</name>
        <dbReference type="ChEBI" id="CHEBI:57540"/>
    </ligand>
</feature>
<feature type="binding site" evidence="2">
    <location>
        <begin position="154"/>
        <end position="156"/>
    </location>
    <ligand>
        <name>substrate</name>
    </ligand>
</feature>
<feature type="binding site" evidence="2">
    <location>
        <position position="200"/>
    </location>
    <ligand>
        <name>substrate</name>
    </ligand>
</feature>
<feature type="binding site" evidence="2">
    <location>
        <begin position="213"/>
        <end position="214"/>
    </location>
    <ligand>
        <name>substrate</name>
    </ligand>
</feature>
<feature type="binding site" evidence="2">
    <location>
        <position position="236"/>
    </location>
    <ligand>
        <name>substrate</name>
    </ligand>
</feature>
<feature type="binding site" evidence="1">
    <location>
        <position position="318"/>
    </location>
    <ligand>
        <name>NAD(+)</name>
        <dbReference type="ChEBI" id="CHEBI:57540"/>
    </ligand>
</feature>
<feature type="site" description="Activates thiol group during catalysis" evidence="1">
    <location>
        <position position="182"/>
    </location>
</feature>
<feature type="mutagenesis site" description="No significant activity." evidence="4">
    <original>C</original>
    <variation>A</variation>
    <variation>G</variation>
    <variation>V</variation>
    <location>
        <position position="155"/>
    </location>
</feature>
<feature type="mutagenesis site" description="10-fold reduction in activity. Increases affinity for D-erythrose-4-phosphate and reduces affinity for glyceraldehyde 3-phosphate." evidence="4">
    <original>H</original>
    <variation>N</variation>
    <location>
        <position position="182"/>
    </location>
</feature>
<feature type="mutagenesis site" description="Reduces activity and affinity for D-erythrose-4-phosphate and increases affinity for glyceraldehyde 3-phosphate." evidence="4">
    <original>C</original>
    <variation>A</variation>
    <variation>Y</variation>
    <location>
        <position position="316"/>
    </location>
</feature>
<feature type="strand" evidence="7">
    <location>
        <begin position="3"/>
        <end position="8"/>
    </location>
</feature>
<feature type="helix" evidence="7">
    <location>
        <begin position="12"/>
        <end position="23"/>
    </location>
</feature>
<feature type="helix" evidence="7">
    <location>
        <begin position="26"/>
        <end position="28"/>
    </location>
</feature>
<feature type="strand" evidence="7">
    <location>
        <begin position="30"/>
        <end position="36"/>
    </location>
</feature>
<feature type="helix" evidence="7">
    <location>
        <begin position="41"/>
        <end position="49"/>
    </location>
</feature>
<feature type="turn" evidence="7">
    <location>
        <begin position="52"/>
        <end position="54"/>
    </location>
</feature>
<feature type="strand" evidence="7">
    <location>
        <begin position="61"/>
        <end position="64"/>
    </location>
</feature>
<feature type="strand" evidence="7">
    <location>
        <begin position="67"/>
        <end position="70"/>
    </location>
</feature>
<feature type="strand" evidence="7">
    <location>
        <begin position="73"/>
        <end position="78"/>
    </location>
</feature>
<feature type="helix" evidence="7">
    <location>
        <begin position="83"/>
        <end position="85"/>
    </location>
</feature>
<feature type="helix" evidence="7">
    <location>
        <begin position="88"/>
        <end position="91"/>
    </location>
</feature>
<feature type="strand" evidence="7">
    <location>
        <begin position="94"/>
        <end position="98"/>
    </location>
</feature>
<feature type="strand" evidence="7">
    <location>
        <begin position="100"/>
        <end position="102"/>
    </location>
</feature>
<feature type="helix" evidence="7">
    <location>
        <begin position="106"/>
        <end position="114"/>
    </location>
</feature>
<feature type="strand" evidence="7">
    <location>
        <begin position="118"/>
        <end position="124"/>
    </location>
</feature>
<feature type="strand" evidence="7">
    <location>
        <begin position="130"/>
        <end position="133"/>
    </location>
</feature>
<feature type="turn" evidence="7">
    <location>
        <begin position="136"/>
        <end position="138"/>
    </location>
</feature>
<feature type="helix" evidence="7">
    <location>
        <begin position="140"/>
        <end position="142"/>
    </location>
</feature>
<feature type="strand" evidence="7">
    <location>
        <begin position="149"/>
        <end position="151"/>
    </location>
</feature>
<feature type="helix" evidence="7">
    <location>
        <begin position="155"/>
        <end position="171"/>
    </location>
</feature>
<feature type="strand" evidence="7">
    <location>
        <begin position="173"/>
        <end position="182"/>
    </location>
</feature>
<feature type="turn" evidence="7">
    <location>
        <begin position="198"/>
        <end position="201"/>
    </location>
</feature>
<feature type="turn" evidence="8">
    <location>
        <begin position="204"/>
        <end position="206"/>
    </location>
</feature>
<feature type="strand" evidence="7">
    <location>
        <begin position="209"/>
        <end position="211"/>
    </location>
</feature>
<feature type="helix" evidence="7">
    <location>
        <begin position="215"/>
        <end position="222"/>
    </location>
</feature>
<feature type="helix" evidence="7">
    <location>
        <begin position="224"/>
        <end position="226"/>
    </location>
</feature>
<feature type="strand" evidence="7">
    <location>
        <begin position="229"/>
        <end position="236"/>
    </location>
</feature>
<feature type="strand" evidence="7">
    <location>
        <begin position="243"/>
        <end position="253"/>
    </location>
</feature>
<feature type="helix" evidence="7">
    <location>
        <begin position="257"/>
        <end position="269"/>
    </location>
</feature>
<feature type="turn" evidence="7">
    <location>
        <begin position="270"/>
        <end position="275"/>
    </location>
</feature>
<feature type="strand" evidence="7">
    <location>
        <begin position="276"/>
        <end position="279"/>
    </location>
</feature>
<feature type="helix" evidence="7">
    <location>
        <begin position="285"/>
        <end position="288"/>
    </location>
</feature>
<feature type="strand" evidence="7">
    <location>
        <begin position="293"/>
        <end position="305"/>
    </location>
</feature>
<feature type="turn" evidence="7">
    <location>
        <begin position="306"/>
        <end position="308"/>
    </location>
</feature>
<feature type="strand" evidence="7">
    <location>
        <begin position="309"/>
        <end position="316"/>
    </location>
</feature>
<feature type="helix" evidence="7">
    <location>
        <begin position="318"/>
        <end position="334"/>
    </location>
</feature>
<keyword id="KW-0002">3D-structure</keyword>
<keyword id="KW-0963">Cytoplasm</keyword>
<keyword id="KW-0903">Direct protein sequencing</keyword>
<keyword id="KW-0520">NAD</keyword>
<keyword id="KW-0560">Oxidoreductase</keyword>
<keyword id="KW-0664">Pyridoxine biosynthesis</keyword>
<keyword id="KW-1185">Reference proteome</keyword>
<proteinExistence type="evidence at protein level"/>